<keyword id="KW-0997">Cell inner membrane</keyword>
<keyword id="KW-1003">Cell membrane</keyword>
<keyword id="KW-0143">Chaperone</keyword>
<keyword id="KW-0472">Membrane</keyword>
<keyword id="KW-0653">Protein transport</keyword>
<keyword id="KW-1185">Reference proteome</keyword>
<keyword id="KW-0812">Transmembrane</keyword>
<keyword id="KW-1133">Transmembrane helix</keyword>
<keyword id="KW-0813">Transport</keyword>
<gene>
    <name evidence="1" type="primary">yidC</name>
    <name type="ordered locus">BB_0442</name>
</gene>
<evidence type="ECO:0000255" key="1">
    <source>
        <dbReference type="HAMAP-Rule" id="MF_01810"/>
    </source>
</evidence>
<accession>O51398</accession>
<comment type="function">
    <text evidence="1">Required for the insertion and/or proper folding and/or complex formation of integral membrane proteins into the membrane. Involved in integration of membrane proteins that insert both dependently and independently of the Sec translocase complex, as well as at least some lipoproteins. Aids folding of multispanning membrane proteins.</text>
</comment>
<comment type="subunit">
    <text evidence="1">Interacts with the Sec translocase complex via SecD. Specifically interacts with transmembrane segments of nascent integral membrane proteins during membrane integration.</text>
</comment>
<comment type="subcellular location">
    <subcellularLocation>
        <location evidence="1">Cell inner membrane</location>
        <topology evidence="1">Multi-pass membrane protein</topology>
    </subcellularLocation>
</comment>
<comment type="similarity">
    <text evidence="1">Belongs to the OXA1/ALB3/YidC family. Type 1 subfamily.</text>
</comment>
<name>YIDC_BORBU</name>
<reference key="1">
    <citation type="journal article" date="1997" name="Nature">
        <title>Genomic sequence of a Lyme disease spirochaete, Borrelia burgdorferi.</title>
        <authorList>
            <person name="Fraser C.M."/>
            <person name="Casjens S."/>
            <person name="Huang W.M."/>
            <person name="Sutton G.G."/>
            <person name="Clayton R.A."/>
            <person name="Lathigra R."/>
            <person name="White O."/>
            <person name="Ketchum K.A."/>
            <person name="Dodson R.J."/>
            <person name="Hickey E.K."/>
            <person name="Gwinn M.L."/>
            <person name="Dougherty B.A."/>
            <person name="Tomb J.-F."/>
            <person name="Fleischmann R.D."/>
            <person name="Richardson D.L."/>
            <person name="Peterson J.D."/>
            <person name="Kerlavage A.R."/>
            <person name="Quackenbush J."/>
            <person name="Salzberg S.L."/>
            <person name="Hanson M."/>
            <person name="van Vugt R."/>
            <person name="Palmer N."/>
            <person name="Adams M.D."/>
            <person name="Gocayne J.D."/>
            <person name="Weidman J.F."/>
            <person name="Utterback T.R."/>
            <person name="Watthey L."/>
            <person name="McDonald L.A."/>
            <person name="Artiach P."/>
            <person name="Bowman C."/>
            <person name="Garland S.A."/>
            <person name="Fujii C."/>
            <person name="Cotton M.D."/>
            <person name="Horst K."/>
            <person name="Roberts K.M."/>
            <person name="Hatch B."/>
            <person name="Smith H.O."/>
            <person name="Venter J.C."/>
        </authorList>
    </citation>
    <scope>NUCLEOTIDE SEQUENCE [LARGE SCALE GENOMIC DNA]</scope>
    <source>
        <strain>ATCC 35210 / DSM 4680 / CIP 102532 / B31</strain>
    </source>
</reference>
<feature type="chain" id="PRO_0000124689" description="Membrane protein insertase YidC">
    <location>
        <begin position="1"/>
        <end position="544"/>
    </location>
</feature>
<feature type="transmembrane region" description="Helical" evidence="1">
    <location>
        <begin position="13"/>
        <end position="33"/>
    </location>
</feature>
<feature type="transmembrane region" description="Helical" evidence="1">
    <location>
        <begin position="343"/>
        <end position="363"/>
    </location>
</feature>
<feature type="transmembrane region" description="Helical" evidence="1">
    <location>
        <begin position="409"/>
        <end position="429"/>
    </location>
</feature>
<feature type="transmembrane region" description="Helical" evidence="1">
    <location>
        <begin position="461"/>
        <end position="481"/>
    </location>
</feature>
<feature type="transmembrane region" description="Helical" evidence="1">
    <location>
        <begin position="506"/>
        <end position="526"/>
    </location>
</feature>
<dbReference type="EMBL" id="AE000783">
    <property type="status" value="NOT_ANNOTATED_CDS"/>
    <property type="molecule type" value="Genomic_DNA"/>
</dbReference>
<dbReference type="PIR" id="A70155">
    <property type="entry name" value="A70155"/>
</dbReference>
<dbReference type="RefSeq" id="WP_020948745.1">
    <property type="nucleotide sequence ID" value="NC_001318.1"/>
</dbReference>
<dbReference type="RefSeq" id="YP_008686576.1">
    <property type="nucleotide sequence ID" value="NC_001318.1"/>
</dbReference>
<dbReference type="SMR" id="O51398"/>
<dbReference type="PATRIC" id="fig|224326.49.peg.833"/>
<dbReference type="OrthoDB" id="9780552at2"/>
<dbReference type="Proteomes" id="UP000001807">
    <property type="component" value="Chromosome"/>
</dbReference>
<dbReference type="GO" id="GO:0005886">
    <property type="term" value="C:plasma membrane"/>
    <property type="evidence" value="ECO:0007669"/>
    <property type="project" value="UniProtKB-SubCell"/>
</dbReference>
<dbReference type="GO" id="GO:0032977">
    <property type="term" value="F:membrane insertase activity"/>
    <property type="evidence" value="ECO:0007669"/>
    <property type="project" value="InterPro"/>
</dbReference>
<dbReference type="GO" id="GO:0051205">
    <property type="term" value="P:protein insertion into membrane"/>
    <property type="evidence" value="ECO:0007669"/>
    <property type="project" value="TreeGrafter"/>
</dbReference>
<dbReference type="GO" id="GO:0015031">
    <property type="term" value="P:protein transport"/>
    <property type="evidence" value="ECO:0007669"/>
    <property type="project" value="UniProtKB-KW"/>
</dbReference>
<dbReference type="CDD" id="cd20070">
    <property type="entry name" value="5TM_YidC_Alb3"/>
    <property type="match status" value="1"/>
</dbReference>
<dbReference type="Gene3D" id="2.70.98.90">
    <property type="match status" value="1"/>
</dbReference>
<dbReference type="HAMAP" id="MF_01810">
    <property type="entry name" value="YidC_type1"/>
    <property type="match status" value="1"/>
</dbReference>
<dbReference type="InterPro" id="IPR019998">
    <property type="entry name" value="Membr_insert_YidC"/>
</dbReference>
<dbReference type="InterPro" id="IPR001708">
    <property type="entry name" value="YidC/ALB3/OXA1/COX18"/>
</dbReference>
<dbReference type="InterPro" id="IPR028055">
    <property type="entry name" value="YidC/Oxa/ALB_C"/>
</dbReference>
<dbReference type="InterPro" id="IPR047196">
    <property type="entry name" value="YidC_ALB_C"/>
</dbReference>
<dbReference type="InterPro" id="IPR038221">
    <property type="entry name" value="YidC_periplasmic_sf"/>
</dbReference>
<dbReference type="NCBIfam" id="NF002358">
    <property type="entry name" value="PRK01318.2-5"/>
    <property type="match status" value="1"/>
</dbReference>
<dbReference type="NCBIfam" id="TIGR03592">
    <property type="entry name" value="yidC_oxa1_cterm"/>
    <property type="match status" value="1"/>
</dbReference>
<dbReference type="PANTHER" id="PTHR12428:SF65">
    <property type="entry name" value="CYTOCHROME C OXIDASE ASSEMBLY PROTEIN COX18, MITOCHONDRIAL"/>
    <property type="match status" value="1"/>
</dbReference>
<dbReference type="PANTHER" id="PTHR12428">
    <property type="entry name" value="OXA1"/>
    <property type="match status" value="1"/>
</dbReference>
<dbReference type="Pfam" id="PF02096">
    <property type="entry name" value="60KD_IMP"/>
    <property type="match status" value="1"/>
</dbReference>
<dbReference type="PRINTS" id="PR00701">
    <property type="entry name" value="60KDINNERMP"/>
</dbReference>
<sequence length="544" mass="64002">MNQSRRILRTVYLSLFLIGLFMLINDIFSSNILSSKSSDKEVQFDLNKSFDDNEMSSVKSNSFNLINKSQDIIVETGIYVATFSTFKGNLVSLKLKNHLNLEKNPTDLINIDRKNETFFDISFDYFVDDLFLYKKIDDFNHEFKAYFKNNGKTYEYVKKYTFSKKDEYLMQFKVTVNGLEDYNLFDFDSYKIIFSSEIERLSDKAKLQYNNYLSQIIYYDNKLKYGKDGLRINNPRWIGSSTKYFGVLVSKENMEVEFKKERGTLKSFIINNVRNKKNISDEFFIYAGPKDNRYLDVFDKRDDNTFGLFDIFFGMSVEKSFWYLIQVPMQMVMQVFYDVIPNWGLSIIFLTIVVRILIFPLTFKGFRATAELSKLQPKMKELQAKFKHDPKKLNEEMGRLYKEEGVNPLGGCLPVILQLPIFFALYSLVNNLFLLRGASFIPGWIDDLSIGDSVYHFGYKLYFVSWTDIRILPFIMMFTQLGSTIVSSNMDLKNLGAQQKFLYFGMPIMFFFILYNMPSGLLIYWITTNIFTILQQYYIKMHLS</sequence>
<organism>
    <name type="scientific">Borreliella burgdorferi (strain ATCC 35210 / DSM 4680 / CIP 102532 / B31)</name>
    <name type="common">Borrelia burgdorferi</name>
    <dbReference type="NCBI Taxonomy" id="224326"/>
    <lineage>
        <taxon>Bacteria</taxon>
        <taxon>Pseudomonadati</taxon>
        <taxon>Spirochaetota</taxon>
        <taxon>Spirochaetia</taxon>
        <taxon>Spirochaetales</taxon>
        <taxon>Borreliaceae</taxon>
        <taxon>Borreliella</taxon>
    </lineage>
</organism>
<protein>
    <recommendedName>
        <fullName evidence="1">Membrane protein insertase YidC</fullName>
    </recommendedName>
    <alternativeName>
        <fullName evidence="1">Foldase YidC</fullName>
    </alternativeName>
    <alternativeName>
        <fullName evidence="1">Membrane integrase YidC</fullName>
    </alternativeName>
    <alternativeName>
        <fullName evidence="1">Membrane protein YidC</fullName>
    </alternativeName>
</protein>
<proteinExistence type="inferred from homology"/>